<keyword id="KW-0053">Apoptosis</keyword>
<keyword id="KW-0175">Coiled coil</keyword>
<keyword id="KW-0963">Cytoplasm</keyword>
<keyword id="KW-0206">Cytoskeleton</keyword>
<keyword id="KW-0221">Differentiation</keyword>
<keyword id="KW-0472">Membrane</keyword>
<keyword id="KW-0493">Microtubule</keyword>
<keyword id="KW-0496">Mitochondrion</keyword>
<keyword id="KW-1000">Mitochondrion outer membrane</keyword>
<keyword id="KW-0539">Nucleus</keyword>
<keyword id="KW-0597">Phosphoprotein</keyword>
<keyword id="KW-1185">Reference proteome</keyword>
<keyword id="KW-0812">Transmembrane</keyword>
<keyword id="KW-1133">Transmembrane helix</keyword>
<organism>
    <name type="scientific">Bos taurus</name>
    <name type="common">Bovine</name>
    <dbReference type="NCBI Taxonomy" id="9913"/>
    <lineage>
        <taxon>Eukaryota</taxon>
        <taxon>Metazoa</taxon>
        <taxon>Chordata</taxon>
        <taxon>Craniata</taxon>
        <taxon>Vertebrata</taxon>
        <taxon>Euteleostomi</taxon>
        <taxon>Mammalia</taxon>
        <taxon>Eutheria</taxon>
        <taxon>Laurasiatheria</taxon>
        <taxon>Artiodactyla</taxon>
        <taxon>Ruminantia</taxon>
        <taxon>Pecora</taxon>
        <taxon>Bovidae</taxon>
        <taxon>Bovinae</taxon>
        <taxon>Bos</taxon>
    </lineage>
</organism>
<protein>
    <recommendedName>
        <fullName evidence="3">Regulator of microtubule dynamics protein 3</fullName>
        <shortName>RMD-3</shortName>
    </recommendedName>
    <alternativeName>
        <fullName>Protein FAM82A2</fullName>
    </alternativeName>
    <alternativeName>
        <fullName>Protein FAM82C</fullName>
    </alternativeName>
</protein>
<name>RMD3_BOVIN</name>
<accession>Q1JQC5</accession>
<proteinExistence type="evidence at transcript level"/>
<dbReference type="EMBL" id="BC116057">
    <property type="protein sequence ID" value="AAI16058.1"/>
    <property type="molecule type" value="mRNA"/>
</dbReference>
<dbReference type="RefSeq" id="NP_001069147.1">
    <property type="nucleotide sequence ID" value="NM_001075679.1"/>
</dbReference>
<dbReference type="RefSeq" id="XP_005211622.1">
    <property type="nucleotide sequence ID" value="XM_005211565.5"/>
</dbReference>
<dbReference type="SMR" id="Q1JQC5"/>
<dbReference type="FunCoup" id="Q1JQC5">
    <property type="interactions" value="1605"/>
</dbReference>
<dbReference type="STRING" id="9913.ENSBTAP00000003795"/>
<dbReference type="PaxDb" id="9913-ENSBTAP00000003795"/>
<dbReference type="GeneID" id="514748"/>
<dbReference type="KEGG" id="bta:514748"/>
<dbReference type="CTD" id="55177"/>
<dbReference type="VEuPathDB" id="HostDB:ENSBTAG00000002921"/>
<dbReference type="eggNOG" id="ENOG502QWUP">
    <property type="taxonomic scope" value="Eukaryota"/>
</dbReference>
<dbReference type="HOGENOM" id="CLU_046369_0_2_1"/>
<dbReference type="InParanoid" id="Q1JQC5"/>
<dbReference type="OMA" id="QHESMHS"/>
<dbReference type="OrthoDB" id="512473at2759"/>
<dbReference type="TreeFam" id="TF315854"/>
<dbReference type="Proteomes" id="UP000009136">
    <property type="component" value="Chromosome 10"/>
</dbReference>
<dbReference type="Bgee" id="ENSBTAG00000002921">
    <property type="expression patterns" value="Expressed in semen and 106 other cell types or tissues"/>
</dbReference>
<dbReference type="GO" id="GO:0005737">
    <property type="term" value="C:cytoplasm"/>
    <property type="evidence" value="ECO:0000318"/>
    <property type="project" value="GO_Central"/>
</dbReference>
<dbReference type="GO" id="GO:0005741">
    <property type="term" value="C:mitochondrial outer membrane"/>
    <property type="evidence" value="ECO:0000250"/>
    <property type="project" value="UniProtKB"/>
</dbReference>
<dbReference type="GO" id="GO:0005739">
    <property type="term" value="C:mitochondrion"/>
    <property type="evidence" value="ECO:0000318"/>
    <property type="project" value="GO_Central"/>
</dbReference>
<dbReference type="GO" id="GO:0097431">
    <property type="term" value="C:mitotic spindle pole"/>
    <property type="evidence" value="ECO:0000318"/>
    <property type="project" value="GO_Central"/>
</dbReference>
<dbReference type="GO" id="GO:0005634">
    <property type="term" value="C:nucleus"/>
    <property type="evidence" value="ECO:0007669"/>
    <property type="project" value="UniProtKB-SubCell"/>
</dbReference>
<dbReference type="GO" id="GO:0005876">
    <property type="term" value="C:spindle microtubule"/>
    <property type="evidence" value="ECO:0000318"/>
    <property type="project" value="GO_Central"/>
</dbReference>
<dbReference type="GO" id="GO:0008017">
    <property type="term" value="F:microtubule binding"/>
    <property type="evidence" value="ECO:0000318"/>
    <property type="project" value="GO_Central"/>
</dbReference>
<dbReference type="GO" id="GO:0006915">
    <property type="term" value="P:apoptotic process"/>
    <property type="evidence" value="ECO:0007669"/>
    <property type="project" value="UniProtKB-KW"/>
</dbReference>
<dbReference type="GO" id="GO:0030154">
    <property type="term" value="P:cell differentiation"/>
    <property type="evidence" value="ECO:0007669"/>
    <property type="project" value="UniProtKB-KW"/>
</dbReference>
<dbReference type="GO" id="GO:0006874">
    <property type="term" value="P:intracellular calcium ion homeostasis"/>
    <property type="evidence" value="ECO:0000250"/>
    <property type="project" value="UniProtKB"/>
</dbReference>
<dbReference type="FunFam" id="1.25.40.10:FF:000310">
    <property type="entry name" value="Regulator of microtubule dynamics protein 3"/>
    <property type="match status" value="1"/>
</dbReference>
<dbReference type="Gene3D" id="1.25.40.10">
    <property type="entry name" value="Tetratricopeptide repeat domain"/>
    <property type="match status" value="1"/>
</dbReference>
<dbReference type="InterPro" id="IPR049039">
    <property type="entry name" value="RMD1-3_a_helical_rpt"/>
</dbReference>
<dbReference type="InterPro" id="IPR011990">
    <property type="entry name" value="TPR-like_helical_dom_sf"/>
</dbReference>
<dbReference type="PANTHER" id="PTHR16056">
    <property type="entry name" value="REGULATOR OF MICROTUBULE DYNAMICS PROTEIN"/>
    <property type="match status" value="1"/>
</dbReference>
<dbReference type="PANTHER" id="PTHR16056:SF18">
    <property type="entry name" value="REGULATOR OF MICROTUBULE DYNAMICS PROTEIN 3"/>
    <property type="match status" value="1"/>
</dbReference>
<dbReference type="Pfam" id="PF21033">
    <property type="entry name" value="RMD1-3"/>
    <property type="match status" value="1"/>
</dbReference>
<dbReference type="SUPFAM" id="SSF48452">
    <property type="entry name" value="TPR-like"/>
    <property type="match status" value="1"/>
</dbReference>
<evidence type="ECO:0000250" key="1"/>
<evidence type="ECO:0000250" key="2">
    <source>
        <dbReference type="UniProtKB" id="Q3UJU9"/>
    </source>
</evidence>
<evidence type="ECO:0000250" key="3">
    <source>
        <dbReference type="UniProtKB" id="Q96TC7"/>
    </source>
</evidence>
<evidence type="ECO:0000255" key="4"/>
<evidence type="ECO:0000256" key="5">
    <source>
        <dbReference type="SAM" id="MobiDB-lite"/>
    </source>
</evidence>
<evidence type="ECO:0000305" key="6"/>
<reference key="1">
    <citation type="submission" date="2006-05" db="EMBL/GenBank/DDBJ databases">
        <authorList>
            <consortium name="NIH - Mammalian Gene Collection (MGC) project"/>
        </authorList>
    </citation>
    <scope>NUCLEOTIDE SEQUENCE [LARGE SCALE MRNA]</scope>
    <source>
        <strain>Hereford</strain>
        <tissue>Ascending colon</tissue>
    </source>
</reference>
<sequence>MSSLGTLGGARAGLGLLLGTAAGLGFLCALYSQRWKRTQRRGQSQSQSNSLDYTQTSEPGRQVRPLRAAPGEAGDAAVLSSLPRGQEVVLDRLEFVLTSLVALRREVEELRSSLQGLAGQIVGEVRSHMEENQKVARRRRFPFARERSDSTGSSSVYFTAASGATFTDAESEGGYTTANAESDYERDSERESDGDGEDEVSCETVKMGRKDSLDLEVEVALGLEPEAPEAGGSPGQEDVMPLLQQADELHQGSEQGKREGFQLLLNNKLVHGSRQDFLWRLARAYSDMCELTEEASEKRSYALSGKEEAEVALEKGNENAECHQWYAVLCGQLAEHEGIQRRIQSGFSFKEHVDKAIALKPENPMAHFLLGRWCYQVSHLSWLEKKTATALSESPLGATVQDALSSFLKAEELQPGFSKAGRIYICKCYKELGKNPEAKEWMKLALELPNVTKEDSAFQKDLEELEVILGE</sequence>
<comment type="function">
    <text evidence="1">Involved in cellular calcium homeostasis regulation (By similarity). May participate in differentiation and apoptosis of keratinocytes. Overexpression induces apoptosis (By similarity).</text>
</comment>
<comment type="subunit">
    <text evidence="3">Interacts with PTPN2. Interacts with microtubules. Interacts with VAPB. Interacts (via FFAT motif) with MOSPD2 (via MSP domain). Interacts (via phosphorylated FFAT motif) with MOSPD2, VAPA and VAPB.</text>
</comment>
<comment type="subcellular location">
    <subcellularLocation>
        <location evidence="3">Mitochondrion outer membrane</location>
        <topology evidence="3">Single-pass membrane protein</topology>
    </subcellularLocation>
    <subcellularLocation>
        <location evidence="3">Cytoplasm</location>
    </subcellularLocation>
    <subcellularLocation>
        <location evidence="3">Nucleus</location>
    </subcellularLocation>
    <subcellularLocation>
        <location evidence="3">Cytoplasm</location>
        <location evidence="3">Cytoskeleton</location>
        <location evidence="3">Spindle</location>
    </subcellularLocation>
    <subcellularLocation>
        <location evidence="3">Cytoplasm</location>
        <location evidence="3">Cytoskeleton</location>
        <location evidence="3">Spindle pole</location>
    </subcellularLocation>
    <text evidence="3">In interphase localizes in the cytoplasm, and during mitosis localizes to the spindle microtubules and spindle poles.</text>
</comment>
<comment type="domain">
    <text evidence="1">The transmembrane region is required for mitochondrial localization.</text>
</comment>
<comment type="domain">
    <text evidence="3">The FFAT motif is required for interaction with MOSPD2. The FFAT motif is involved in the interaction with VAPA and VAPB and its phosphorylation regulates these interactions.</text>
</comment>
<comment type="PTM">
    <text evidence="3">Phosphorylation at Thr-160 of the FFAT motif activates interaction with MOSPD2, VAPA and VAPB.</text>
</comment>
<comment type="similarity">
    <text evidence="6">Belongs to the RMDN family.</text>
</comment>
<gene>
    <name evidence="3" type="primary">RMDN3</name>
    <name type="synonym">FAM82A2</name>
    <name type="synonym">FAM82C</name>
</gene>
<feature type="chain" id="PRO_0000287509" description="Regulator of microtubule dynamics protein 3">
    <location>
        <begin position="1"/>
        <end position="471"/>
    </location>
</feature>
<feature type="topological domain" description="Mitochondrial intermembrane" evidence="6">
    <location>
        <begin position="1"/>
        <end position="9"/>
    </location>
</feature>
<feature type="transmembrane region" description="Helical" evidence="4">
    <location>
        <begin position="10"/>
        <end position="32"/>
    </location>
</feature>
<feature type="topological domain" description="Cytoplasmic" evidence="6">
    <location>
        <begin position="33"/>
        <end position="471"/>
    </location>
</feature>
<feature type="region of interest" description="Disordered" evidence="5">
    <location>
        <begin position="39"/>
        <end position="70"/>
    </location>
</feature>
<feature type="region of interest" description="Disordered" evidence="5">
    <location>
        <begin position="169"/>
        <end position="206"/>
    </location>
</feature>
<feature type="coiled-coil region" evidence="4">
    <location>
        <begin position="90"/>
        <end position="123"/>
    </location>
</feature>
<feature type="short sequence motif" description="FFAT" evidence="3">
    <location>
        <begin position="156"/>
        <end position="162"/>
    </location>
</feature>
<feature type="compositionally biased region" description="Low complexity" evidence="5">
    <location>
        <begin position="41"/>
        <end position="50"/>
    </location>
</feature>
<feature type="compositionally biased region" description="Basic and acidic residues" evidence="5">
    <location>
        <begin position="183"/>
        <end position="193"/>
    </location>
</feature>
<feature type="modified residue" description="Phosphoserine" evidence="3">
    <location>
        <position position="44"/>
    </location>
</feature>
<feature type="modified residue" description="Phosphoserine" evidence="3">
    <location>
        <position position="46"/>
    </location>
</feature>
<feature type="modified residue" description="Phosphoserine" evidence="3">
    <location>
        <position position="50"/>
    </location>
</feature>
<feature type="modified residue" description="Phosphoserine" evidence="2">
    <location>
        <position position="57"/>
    </location>
</feature>
<feature type="modified residue" description="Phosphothreonine" evidence="3">
    <location>
        <position position="159"/>
    </location>
</feature>
<feature type="modified residue" description="Phosphoserine" evidence="3">
    <location>
        <position position="182"/>
    </location>
</feature>
<feature type="modified residue" description="Phosphoserine" evidence="3">
    <location>
        <position position="192"/>
    </location>
</feature>
<feature type="modified residue" description="Phosphoserine" evidence="3">
    <location>
        <position position="212"/>
    </location>
</feature>
<feature type="modified residue" description="Phosphoserine" evidence="3">
    <location>
        <position position="233"/>
    </location>
</feature>